<accession>A9BDY6</accession>
<organism>
    <name type="scientific">Prochlorococcus marinus (strain MIT 9211)</name>
    <dbReference type="NCBI Taxonomy" id="93059"/>
    <lineage>
        <taxon>Bacteria</taxon>
        <taxon>Bacillati</taxon>
        <taxon>Cyanobacteriota</taxon>
        <taxon>Cyanophyceae</taxon>
        <taxon>Synechococcales</taxon>
        <taxon>Prochlorococcaceae</taxon>
        <taxon>Prochlorococcus</taxon>
    </lineage>
</organism>
<name>PSAE_PROM4</name>
<comment type="function">
    <text evidence="1">Stabilizes the interaction between PsaC and the PSI core, assists the docking of the ferredoxin to PSI and interacts with ferredoxin-NADP oxidoreductase.</text>
</comment>
<comment type="subcellular location">
    <subcellularLocation>
        <location evidence="1">Cellular thylakoid membrane</location>
        <topology evidence="1">Peripheral membrane protein</topology>
    </subcellularLocation>
</comment>
<comment type="similarity">
    <text evidence="1">Belongs to the PsaE family.</text>
</comment>
<evidence type="ECO:0000255" key="1">
    <source>
        <dbReference type="HAMAP-Rule" id="MF_00613"/>
    </source>
</evidence>
<keyword id="KW-0472">Membrane</keyword>
<keyword id="KW-0602">Photosynthesis</keyword>
<keyword id="KW-0603">Photosystem I</keyword>
<keyword id="KW-1185">Reference proteome</keyword>
<keyword id="KW-0793">Thylakoid</keyword>
<gene>
    <name evidence="1" type="primary">psaE</name>
    <name type="ordered locus">P9211_03651</name>
</gene>
<feature type="chain" id="PRO_1000130401" description="Photosystem I reaction center subunit IV">
    <location>
        <begin position="1"/>
        <end position="69"/>
    </location>
</feature>
<reference key="1">
    <citation type="journal article" date="2007" name="PLoS Genet.">
        <title>Patterns and implications of gene gain and loss in the evolution of Prochlorococcus.</title>
        <authorList>
            <person name="Kettler G.C."/>
            <person name="Martiny A.C."/>
            <person name="Huang K."/>
            <person name="Zucker J."/>
            <person name="Coleman M.L."/>
            <person name="Rodrigue S."/>
            <person name="Chen F."/>
            <person name="Lapidus A."/>
            <person name="Ferriera S."/>
            <person name="Johnson J."/>
            <person name="Steglich C."/>
            <person name="Church G.M."/>
            <person name="Richardson P."/>
            <person name="Chisholm S.W."/>
        </authorList>
    </citation>
    <scope>NUCLEOTIDE SEQUENCE [LARGE SCALE GENOMIC DNA]</scope>
    <source>
        <strain>MIT 9211</strain>
    </source>
</reference>
<proteinExistence type="inferred from homology"/>
<dbReference type="EMBL" id="CP000878">
    <property type="protein sequence ID" value="ABX08296.1"/>
    <property type="molecule type" value="Genomic_DNA"/>
</dbReference>
<dbReference type="RefSeq" id="WP_012194920.1">
    <property type="nucleotide sequence ID" value="NC_009976.1"/>
</dbReference>
<dbReference type="SMR" id="A9BDY6"/>
<dbReference type="STRING" id="93059.P9211_03651"/>
<dbReference type="KEGG" id="pmj:P9211_03651"/>
<dbReference type="eggNOG" id="ENOG503313D">
    <property type="taxonomic scope" value="Bacteria"/>
</dbReference>
<dbReference type="HOGENOM" id="CLU_136462_2_1_3"/>
<dbReference type="OrthoDB" id="427926at2"/>
<dbReference type="Proteomes" id="UP000000788">
    <property type="component" value="Chromosome"/>
</dbReference>
<dbReference type="GO" id="GO:0009538">
    <property type="term" value="C:photosystem I reaction center"/>
    <property type="evidence" value="ECO:0007669"/>
    <property type="project" value="InterPro"/>
</dbReference>
<dbReference type="GO" id="GO:0031676">
    <property type="term" value="C:plasma membrane-derived thylakoid membrane"/>
    <property type="evidence" value="ECO:0007669"/>
    <property type="project" value="UniProtKB-SubCell"/>
</dbReference>
<dbReference type="GO" id="GO:0015979">
    <property type="term" value="P:photosynthesis"/>
    <property type="evidence" value="ECO:0007669"/>
    <property type="project" value="UniProtKB-UniRule"/>
</dbReference>
<dbReference type="Gene3D" id="2.30.30.50">
    <property type="match status" value="1"/>
</dbReference>
<dbReference type="HAMAP" id="MF_00613">
    <property type="entry name" value="PSI_PsaE"/>
    <property type="match status" value="1"/>
</dbReference>
<dbReference type="InterPro" id="IPR008990">
    <property type="entry name" value="Elect_transpt_acc-like_dom_sf"/>
</dbReference>
<dbReference type="InterPro" id="IPR003375">
    <property type="entry name" value="PSI_PsaE"/>
</dbReference>
<dbReference type="NCBIfam" id="NF002745">
    <property type="entry name" value="PRK02749.1"/>
    <property type="match status" value="1"/>
</dbReference>
<dbReference type="PANTHER" id="PTHR34549">
    <property type="entry name" value="PHOTOSYSTEM I REACTION CENTER SUBUNIT IV A, CHLOROPLASTIC-RELATED"/>
    <property type="match status" value="1"/>
</dbReference>
<dbReference type="PANTHER" id="PTHR34549:SF2">
    <property type="entry name" value="PHOTOSYSTEM I SUBUNIT IV"/>
    <property type="match status" value="1"/>
</dbReference>
<dbReference type="Pfam" id="PF02427">
    <property type="entry name" value="PSI_PsaE"/>
    <property type="match status" value="1"/>
</dbReference>
<dbReference type="SUPFAM" id="SSF50090">
    <property type="entry name" value="Electron transport accessory proteins"/>
    <property type="match status" value="1"/>
</dbReference>
<sequence length="69" mass="7661">MAISRGDKVRVKRPESYWYNEVGKVASVDTSGIKYPVVVRFEKVNYAAYSGVDGGNNTNNFAENELEAV</sequence>
<protein>
    <recommendedName>
        <fullName evidence="1">Photosystem I reaction center subunit IV</fullName>
    </recommendedName>
</protein>